<evidence type="ECO:0000255" key="1">
    <source>
        <dbReference type="HAMAP-Rule" id="MF_01621"/>
    </source>
</evidence>
<evidence type="ECO:0000256" key="2">
    <source>
        <dbReference type="SAM" id="MobiDB-lite"/>
    </source>
</evidence>
<proteinExistence type="inferred from homology"/>
<protein>
    <recommendedName>
        <fullName evidence="1">Fatty acid oxidation complex subunit alpha</fullName>
    </recommendedName>
    <domain>
        <recommendedName>
            <fullName evidence="1">Enoyl-CoA hydratase/Delta(3)-cis-Delta(2)-trans-enoyl-CoA isomerase/3-hydroxybutyryl-CoA epimerase</fullName>
            <ecNumber evidence="1">4.2.1.17</ecNumber>
            <ecNumber evidence="1">5.1.2.3</ecNumber>
            <ecNumber evidence="1">5.3.3.8</ecNumber>
        </recommendedName>
    </domain>
    <domain>
        <recommendedName>
            <fullName evidence="1">3-hydroxyacyl-CoA dehydrogenase</fullName>
            <ecNumber evidence="1">1.1.1.35</ecNumber>
        </recommendedName>
    </domain>
</protein>
<reference key="1">
    <citation type="journal article" date="2009" name="PLoS Genet.">
        <title>Organised genome dynamics in the Escherichia coli species results in highly diverse adaptive paths.</title>
        <authorList>
            <person name="Touchon M."/>
            <person name="Hoede C."/>
            <person name="Tenaillon O."/>
            <person name="Barbe V."/>
            <person name="Baeriswyl S."/>
            <person name="Bidet P."/>
            <person name="Bingen E."/>
            <person name="Bonacorsi S."/>
            <person name="Bouchier C."/>
            <person name="Bouvet O."/>
            <person name="Calteau A."/>
            <person name="Chiapello H."/>
            <person name="Clermont O."/>
            <person name="Cruveiller S."/>
            <person name="Danchin A."/>
            <person name="Diard M."/>
            <person name="Dossat C."/>
            <person name="Karoui M.E."/>
            <person name="Frapy E."/>
            <person name="Garry L."/>
            <person name="Ghigo J.M."/>
            <person name="Gilles A.M."/>
            <person name="Johnson J."/>
            <person name="Le Bouguenec C."/>
            <person name="Lescat M."/>
            <person name="Mangenot S."/>
            <person name="Martinez-Jehanne V."/>
            <person name="Matic I."/>
            <person name="Nassif X."/>
            <person name="Oztas S."/>
            <person name="Petit M.A."/>
            <person name="Pichon C."/>
            <person name="Rouy Z."/>
            <person name="Ruf C.S."/>
            <person name="Schneider D."/>
            <person name="Tourret J."/>
            <person name="Vacherie B."/>
            <person name="Vallenet D."/>
            <person name="Medigue C."/>
            <person name="Rocha E.P.C."/>
            <person name="Denamur E."/>
        </authorList>
    </citation>
    <scope>NUCLEOTIDE SEQUENCE [LARGE SCALE GENOMIC DNA]</scope>
    <source>
        <strain>UMN026 / ExPEC</strain>
    </source>
</reference>
<sequence length="729" mass="79566">MLYKGDTLYLDWLEDGIAELVFDAPGSVNKLDTATVASLGEAIGVLEQQSDLKGLLLRSNKAAFIVGADITEFLSLFLVPEEQLSQWLHFANSVFNRLEDLPVPTIAAVNGYALGGGCECVLATDYRLATPDLRIGLPETKLGIMPGFGGSVRMPRMLGADSALEIIAAGKDVGADQALKIGLVDGVVKAEKLVEGAMAILRQAINGDLDWKAKRQPKLEPLKLSKIEATMSFTIAKGMVAQTAGKHYPAPITAVKTIEAAARFGREEALNLENKSFVPLAHTNEARALVGIFLNDQYVKGKAKKLTKDVETPKQAAVLGAGIMGGGIAYQSAWKGVPVVMKDINDKSLTLGMTEAAKLLNKQLERGKIDGLKLAGVISTIHPTLDYAGFDRVDIVVEAVVENPKVKKAVLAETEQKVRPDTVLASNTSTIPISELANALERPENFCGMHFFNPVHRMPLVEIIRGEKSSDETIAKVVAWASKMGKTPIVVNDCPGFFVNRVLFPYFAGFSQLLRDGADFRKIDKVMEKQFGWPMGPAYLLDVVGIDTAHHAQAVMAAGFPQRMQKDYRDAIDALFDANRFGQKNGLGFWRYKEDSKGKPKKEEDAAVDDLLAEVSQPKRDFSEEEIIARMMIPMVNEVVRCLEEGIIATPAEADMALVYGLGFPPFHGGAFRWLDTLGSAKYLDMAQQYQHLGPLYEVPEGLRNKARHNEPYYPPVEPARPVGDLKTA</sequence>
<organism>
    <name type="scientific">Escherichia coli O17:K52:H18 (strain UMN026 / ExPEC)</name>
    <dbReference type="NCBI Taxonomy" id="585056"/>
    <lineage>
        <taxon>Bacteria</taxon>
        <taxon>Pseudomonadati</taxon>
        <taxon>Pseudomonadota</taxon>
        <taxon>Gammaproteobacteria</taxon>
        <taxon>Enterobacterales</taxon>
        <taxon>Enterobacteriaceae</taxon>
        <taxon>Escherichia</taxon>
    </lineage>
</organism>
<feature type="chain" id="PRO_1000186040" description="Fatty acid oxidation complex subunit alpha">
    <location>
        <begin position="1"/>
        <end position="729"/>
    </location>
</feature>
<feature type="region of interest" description="Enoyl-CoA hydratase/isomerase" evidence="1">
    <location>
        <begin position="1"/>
        <end position="189"/>
    </location>
</feature>
<feature type="region of interest" description="3-hydroxyacyl-CoA dehydrogenase" evidence="1">
    <location>
        <begin position="311"/>
        <end position="729"/>
    </location>
</feature>
<feature type="region of interest" description="Disordered" evidence="2">
    <location>
        <begin position="708"/>
        <end position="729"/>
    </location>
</feature>
<feature type="active site" description="For 3-hydroxyacyl-CoA dehydrogenase activity" evidence="1">
    <location>
        <position position="450"/>
    </location>
</feature>
<feature type="binding site" evidence="1">
    <location>
        <position position="296"/>
    </location>
    <ligand>
        <name>substrate</name>
    </ligand>
</feature>
<feature type="binding site" evidence="1">
    <location>
        <position position="324"/>
    </location>
    <ligand>
        <name>NAD(+)</name>
        <dbReference type="ChEBI" id="CHEBI:57540"/>
    </ligand>
</feature>
<feature type="binding site" evidence="1">
    <location>
        <position position="343"/>
    </location>
    <ligand>
        <name>NAD(+)</name>
        <dbReference type="ChEBI" id="CHEBI:57540"/>
    </ligand>
</feature>
<feature type="binding site" evidence="1">
    <location>
        <begin position="400"/>
        <end position="402"/>
    </location>
    <ligand>
        <name>NAD(+)</name>
        <dbReference type="ChEBI" id="CHEBI:57540"/>
    </ligand>
</feature>
<feature type="binding site" evidence="1">
    <location>
        <position position="407"/>
    </location>
    <ligand>
        <name>NAD(+)</name>
        <dbReference type="ChEBI" id="CHEBI:57540"/>
    </ligand>
</feature>
<feature type="binding site" evidence="1">
    <location>
        <position position="429"/>
    </location>
    <ligand>
        <name>NAD(+)</name>
        <dbReference type="ChEBI" id="CHEBI:57540"/>
    </ligand>
</feature>
<feature type="binding site" evidence="1">
    <location>
        <position position="453"/>
    </location>
    <ligand>
        <name>NAD(+)</name>
        <dbReference type="ChEBI" id="CHEBI:57540"/>
    </ligand>
</feature>
<feature type="binding site" evidence="1">
    <location>
        <position position="500"/>
    </location>
    <ligand>
        <name>substrate</name>
    </ligand>
</feature>
<feature type="binding site" evidence="1">
    <location>
        <position position="660"/>
    </location>
    <ligand>
        <name>substrate</name>
    </ligand>
</feature>
<feature type="site" description="Important for catalytic activity" evidence="1">
    <location>
        <position position="119"/>
    </location>
</feature>
<feature type="site" description="Important for catalytic activity" evidence="1">
    <location>
        <position position="139"/>
    </location>
</feature>
<accession>B7NFE7</accession>
<name>FADB_ECOLU</name>
<comment type="function">
    <text evidence="1">Involved in the aerobic and anaerobic degradation of long-chain fatty acids via beta-oxidation cycle. Catalyzes the formation of 3-oxoacyl-CoA from enoyl-CoA via L-3-hydroxyacyl-CoA. It can also use D-3-hydroxyacyl-CoA and cis-3-enoyl-CoA as substrate.</text>
</comment>
<comment type="catalytic activity">
    <reaction evidence="1">
        <text>a (3S)-3-hydroxyacyl-CoA + NAD(+) = a 3-oxoacyl-CoA + NADH + H(+)</text>
        <dbReference type="Rhea" id="RHEA:22432"/>
        <dbReference type="ChEBI" id="CHEBI:15378"/>
        <dbReference type="ChEBI" id="CHEBI:57318"/>
        <dbReference type="ChEBI" id="CHEBI:57540"/>
        <dbReference type="ChEBI" id="CHEBI:57945"/>
        <dbReference type="ChEBI" id="CHEBI:90726"/>
        <dbReference type="EC" id="1.1.1.35"/>
    </reaction>
</comment>
<comment type="catalytic activity">
    <reaction evidence="1">
        <text>a (3S)-3-hydroxyacyl-CoA = a (2E)-enoyl-CoA + H2O</text>
        <dbReference type="Rhea" id="RHEA:16105"/>
        <dbReference type="ChEBI" id="CHEBI:15377"/>
        <dbReference type="ChEBI" id="CHEBI:57318"/>
        <dbReference type="ChEBI" id="CHEBI:58856"/>
        <dbReference type="EC" id="4.2.1.17"/>
    </reaction>
</comment>
<comment type="catalytic activity">
    <reaction evidence="1">
        <text>a 4-saturated-(3S)-3-hydroxyacyl-CoA = a (3E)-enoyl-CoA + H2O</text>
        <dbReference type="Rhea" id="RHEA:20724"/>
        <dbReference type="ChEBI" id="CHEBI:15377"/>
        <dbReference type="ChEBI" id="CHEBI:58521"/>
        <dbReference type="ChEBI" id="CHEBI:137480"/>
        <dbReference type="EC" id="4.2.1.17"/>
    </reaction>
</comment>
<comment type="catalytic activity">
    <reaction evidence="1">
        <text>(3S)-3-hydroxybutanoyl-CoA = (3R)-3-hydroxybutanoyl-CoA</text>
        <dbReference type="Rhea" id="RHEA:21760"/>
        <dbReference type="ChEBI" id="CHEBI:57315"/>
        <dbReference type="ChEBI" id="CHEBI:57316"/>
        <dbReference type="EC" id="5.1.2.3"/>
    </reaction>
</comment>
<comment type="catalytic activity">
    <reaction evidence="1">
        <text>a (3Z)-enoyl-CoA = a 4-saturated (2E)-enoyl-CoA</text>
        <dbReference type="Rhea" id="RHEA:45900"/>
        <dbReference type="ChEBI" id="CHEBI:85097"/>
        <dbReference type="ChEBI" id="CHEBI:85489"/>
        <dbReference type="EC" id="5.3.3.8"/>
    </reaction>
</comment>
<comment type="catalytic activity">
    <reaction evidence="1">
        <text>a (3E)-enoyl-CoA = a 4-saturated (2E)-enoyl-CoA</text>
        <dbReference type="Rhea" id="RHEA:45228"/>
        <dbReference type="ChEBI" id="CHEBI:58521"/>
        <dbReference type="ChEBI" id="CHEBI:85097"/>
        <dbReference type="EC" id="5.3.3.8"/>
    </reaction>
</comment>
<comment type="pathway">
    <text evidence="1">Lipid metabolism; fatty acid beta-oxidation.</text>
</comment>
<comment type="subunit">
    <text evidence="1">Heterotetramer of two alpha chains (FadB) and two beta chains (FadA).</text>
</comment>
<comment type="similarity">
    <text evidence="1">In the N-terminal section; belongs to the enoyl-CoA hydratase/isomerase family.</text>
</comment>
<comment type="similarity">
    <text evidence="1">In the C-terminal section; belongs to the 3-hydroxyacyl-CoA dehydrogenase family.</text>
</comment>
<keyword id="KW-0276">Fatty acid metabolism</keyword>
<keyword id="KW-0413">Isomerase</keyword>
<keyword id="KW-0442">Lipid degradation</keyword>
<keyword id="KW-0443">Lipid metabolism</keyword>
<keyword id="KW-0456">Lyase</keyword>
<keyword id="KW-0511">Multifunctional enzyme</keyword>
<keyword id="KW-0520">NAD</keyword>
<keyword id="KW-0560">Oxidoreductase</keyword>
<dbReference type="EC" id="4.2.1.17" evidence="1"/>
<dbReference type="EC" id="5.1.2.3" evidence="1"/>
<dbReference type="EC" id="5.3.3.8" evidence="1"/>
<dbReference type="EC" id="1.1.1.35" evidence="1"/>
<dbReference type="EMBL" id="CU928163">
    <property type="protein sequence ID" value="CAR15503.1"/>
    <property type="molecule type" value="Genomic_DNA"/>
</dbReference>
<dbReference type="RefSeq" id="WP_000965964.1">
    <property type="nucleotide sequence ID" value="NC_011751.1"/>
</dbReference>
<dbReference type="RefSeq" id="YP_002414996.1">
    <property type="nucleotide sequence ID" value="NC_011751.1"/>
</dbReference>
<dbReference type="SMR" id="B7NFE7"/>
<dbReference type="STRING" id="585056.ECUMN_4370"/>
<dbReference type="KEGG" id="eum:ECUMN_4370"/>
<dbReference type="PATRIC" id="fig|585056.7.peg.4538"/>
<dbReference type="HOGENOM" id="CLU_009834_16_3_6"/>
<dbReference type="UniPathway" id="UPA00659"/>
<dbReference type="Proteomes" id="UP000007097">
    <property type="component" value="Chromosome"/>
</dbReference>
<dbReference type="GO" id="GO:0036125">
    <property type="term" value="C:fatty acid beta-oxidation multienzyme complex"/>
    <property type="evidence" value="ECO:0007669"/>
    <property type="project" value="InterPro"/>
</dbReference>
<dbReference type="GO" id="GO:0008692">
    <property type="term" value="F:3-hydroxybutyryl-CoA epimerase activity"/>
    <property type="evidence" value="ECO:0007669"/>
    <property type="project" value="UniProtKB-UniRule"/>
</dbReference>
<dbReference type="GO" id="GO:0004165">
    <property type="term" value="F:delta(3)-delta(2)-enoyl-CoA isomerase activity"/>
    <property type="evidence" value="ECO:0007669"/>
    <property type="project" value="UniProtKB-UniRule"/>
</dbReference>
<dbReference type="GO" id="GO:0004300">
    <property type="term" value="F:enoyl-CoA hydratase activity"/>
    <property type="evidence" value="ECO:0007669"/>
    <property type="project" value="UniProtKB-UniRule"/>
</dbReference>
<dbReference type="GO" id="GO:0016509">
    <property type="term" value="F:long-chain-3-hydroxyacyl-CoA dehydrogenase activity"/>
    <property type="evidence" value="ECO:0007669"/>
    <property type="project" value="TreeGrafter"/>
</dbReference>
<dbReference type="GO" id="GO:0070403">
    <property type="term" value="F:NAD+ binding"/>
    <property type="evidence" value="ECO:0007669"/>
    <property type="project" value="InterPro"/>
</dbReference>
<dbReference type="GO" id="GO:0006635">
    <property type="term" value="P:fatty acid beta-oxidation"/>
    <property type="evidence" value="ECO:0007669"/>
    <property type="project" value="UniProtKB-UniRule"/>
</dbReference>
<dbReference type="CDD" id="cd06558">
    <property type="entry name" value="crotonase-like"/>
    <property type="match status" value="1"/>
</dbReference>
<dbReference type="FunFam" id="1.10.1040.50:FF:000001">
    <property type="entry name" value="Fatty acid oxidation complex subunit alpha"/>
    <property type="match status" value="1"/>
</dbReference>
<dbReference type="FunFam" id="3.90.226.10:FF:000018">
    <property type="entry name" value="Fatty acid oxidation complex subunit alpha"/>
    <property type="match status" value="1"/>
</dbReference>
<dbReference type="FunFam" id="3.40.50.720:FF:000009">
    <property type="entry name" value="Fatty oxidation complex, alpha subunit"/>
    <property type="match status" value="1"/>
</dbReference>
<dbReference type="Gene3D" id="1.10.1040.50">
    <property type="match status" value="1"/>
</dbReference>
<dbReference type="Gene3D" id="3.90.226.10">
    <property type="entry name" value="2-enoyl-CoA Hydratase, Chain A, domain 1"/>
    <property type="match status" value="1"/>
</dbReference>
<dbReference type="Gene3D" id="3.40.50.720">
    <property type="entry name" value="NAD(P)-binding Rossmann-like Domain"/>
    <property type="match status" value="1"/>
</dbReference>
<dbReference type="HAMAP" id="MF_01621">
    <property type="entry name" value="FadB"/>
    <property type="match status" value="1"/>
</dbReference>
<dbReference type="InterPro" id="IPR006180">
    <property type="entry name" value="3-OHacyl-CoA_DH_CS"/>
</dbReference>
<dbReference type="InterPro" id="IPR006176">
    <property type="entry name" value="3-OHacyl-CoA_DH_NAD-bd"/>
</dbReference>
<dbReference type="InterPro" id="IPR006108">
    <property type="entry name" value="3HC_DH_C"/>
</dbReference>
<dbReference type="InterPro" id="IPR008927">
    <property type="entry name" value="6-PGluconate_DH-like_C_sf"/>
</dbReference>
<dbReference type="InterPro" id="IPR029045">
    <property type="entry name" value="ClpP/crotonase-like_dom_sf"/>
</dbReference>
<dbReference type="InterPro" id="IPR018376">
    <property type="entry name" value="Enoyl-CoA_hyd/isom_CS"/>
</dbReference>
<dbReference type="InterPro" id="IPR001753">
    <property type="entry name" value="Enoyl-CoA_hydra/iso"/>
</dbReference>
<dbReference type="InterPro" id="IPR050136">
    <property type="entry name" value="FA_oxidation_alpha_subunit"/>
</dbReference>
<dbReference type="InterPro" id="IPR012799">
    <property type="entry name" value="FadB"/>
</dbReference>
<dbReference type="InterPro" id="IPR036291">
    <property type="entry name" value="NAD(P)-bd_dom_sf"/>
</dbReference>
<dbReference type="NCBIfam" id="TIGR02437">
    <property type="entry name" value="FadB"/>
    <property type="match status" value="1"/>
</dbReference>
<dbReference type="NCBIfam" id="NF008727">
    <property type="entry name" value="PRK11730.1"/>
    <property type="match status" value="1"/>
</dbReference>
<dbReference type="PANTHER" id="PTHR43612">
    <property type="entry name" value="TRIFUNCTIONAL ENZYME SUBUNIT ALPHA"/>
    <property type="match status" value="1"/>
</dbReference>
<dbReference type="PANTHER" id="PTHR43612:SF3">
    <property type="entry name" value="TRIFUNCTIONAL ENZYME SUBUNIT ALPHA, MITOCHONDRIAL"/>
    <property type="match status" value="1"/>
</dbReference>
<dbReference type="Pfam" id="PF00725">
    <property type="entry name" value="3HCDH"/>
    <property type="match status" value="2"/>
</dbReference>
<dbReference type="Pfam" id="PF02737">
    <property type="entry name" value="3HCDH_N"/>
    <property type="match status" value="1"/>
</dbReference>
<dbReference type="Pfam" id="PF00378">
    <property type="entry name" value="ECH_1"/>
    <property type="match status" value="1"/>
</dbReference>
<dbReference type="SUPFAM" id="SSF48179">
    <property type="entry name" value="6-phosphogluconate dehydrogenase C-terminal domain-like"/>
    <property type="match status" value="2"/>
</dbReference>
<dbReference type="SUPFAM" id="SSF52096">
    <property type="entry name" value="ClpP/crotonase"/>
    <property type="match status" value="1"/>
</dbReference>
<dbReference type="SUPFAM" id="SSF51735">
    <property type="entry name" value="NAD(P)-binding Rossmann-fold domains"/>
    <property type="match status" value="1"/>
</dbReference>
<dbReference type="PROSITE" id="PS00067">
    <property type="entry name" value="3HCDH"/>
    <property type="match status" value="1"/>
</dbReference>
<dbReference type="PROSITE" id="PS00166">
    <property type="entry name" value="ENOYL_COA_HYDRATASE"/>
    <property type="match status" value="1"/>
</dbReference>
<gene>
    <name evidence="1" type="primary">fadB</name>
    <name type="ordered locus">ECUMN_4370</name>
</gene>